<comment type="function">
    <text evidence="1">Autophagy factor required for autophagosome formation.</text>
</comment>
<comment type="subcellular location">
    <subcellularLocation>
        <location evidence="1">Cytoplasm</location>
    </subcellularLocation>
    <subcellularLocation>
        <location evidence="1">Preautophagosomal structure</location>
    </subcellularLocation>
    <text evidence="1">Under starvation conditions, it is localized to puncate structures primarily representing the isolation membrane; the isolation membrane sequesters a portion of the cytoplasm resulting in autophagosome formation.</text>
</comment>
<comment type="similarity">
    <text evidence="2">Belongs to the ATG101 family.</text>
</comment>
<reference key="1">
    <citation type="submission" date="2007-03" db="EMBL/GenBank/DDBJ databases">
        <authorList>
            <consortium name="NIH - Xenopus Gene Collection (XGC) project"/>
        </authorList>
    </citation>
    <scope>NUCLEOTIDE SEQUENCE [LARGE SCALE MRNA]</scope>
    <source>
        <tissue>Embryo</tissue>
    </source>
</reference>
<name>ATGA1_XENTR</name>
<gene>
    <name type="primary">atg101</name>
</gene>
<keyword id="KW-0072">Autophagy</keyword>
<keyword id="KW-0963">Cytoplasm</keyword>
<keyword id="KW-1185">Reference proteome</keyword>
<protein>
    <recommendedName>
        <fullName>Autophagy-related protein 101</fullName>
    </recommendedName>
</protein>
<proteinExistence type="evidence at transcript level"/>
<dbReference type="EMBL" id="BC135403">
    <property type="protein sequence ID" value="AAI35404.1"/>
    <property type="molecule type" value="mRNA"/>
</dbReference>
<dbReference type="RefSeq" id="NP_001016820.1">
    <property type="nucleotide sequence ID" value="NM_001016820.2"/>
</dbReference>
<dbReference type="SMR" id="A4IH75"/>
<dbReference type="FunCoup" id="A4IH75">
    <property type="interactions" value="601"/>
</dbReference>
<dbReference type="STRING" id="8364.ENSXETP00000028915"/>
<dbReference type="DNASU" id="549574"/>
<dbReference type="GeneID" id="549574"/>
<dbReference type="KEGG" id="xtr:549574"/>
<dbReference type="AGR" id="Xenbase:XB-GENE-5873849"/>
<dbReference type="CTD" id="60673"/>
<dbReference type="Xenbase" id="XB-GENE-5873849">
    <property type="gene designation" value="atg101"/>
</dbReference>
<dbReference type="InParanoid" id="A4IH75"/>
<dbReference type="OMA" id="TMNCRSE"/>
<dbReference type="OrthoDB" id="10259639at2759"/>
<dbReference type="Proteomes" id="UP000008143">
    <property type="component" value="Chromosome 2"/>
</dbReference>
<dbReference type="GO" id="GO:0000407">
    <property type="term" value="C:phagophore assembly site"/>
    <property type="evidence" value="ECO:0007669"/>
    <property type="project" value="UniProtKB-SubCell"/>
</dbReference>
<dbReference type="GO" id="GO:0006914">
    <property type="term" value="P:autophagy"/>
    <property type="evidence" value="ECO:0007669"/>
    <property type="project" value="UniProtKB-KW"/>
</dbReference>
<dbReference type="InterPro" id="IPR012445">
    <property type="entry name" value="ATG101"/>
</dbReference>
<dbReference type="PANTHER" id="PTHR13292">
    <property type="entry name" value="AUTOPHAGY-RELATED PROTEIN 101"/>
    <property type="match status" value="1"/>
</dbReference>
<dbReference type="PANTHER" id="PTHR13292:SF0">
    <property type="entry name" value="AUTOPHAGY-RELATED PROTEIN 101"/>
    <property type="match status" value="1"/>
</dbReference>
<dbReference type="Pfam" id="PF07855">
    <property type="entry name" value="ATG101"/>
    <property type="match status" value="1"/>
</dbReference>
<accession>A4IH75</accession>
<sequence>MNCRSEVLEVSVEGRQVEEAVLAVLHTILLHRSTGKFHYKKEGTYSIGTVGTQDIDCDFIEFTYVRVSSEELDRALHKAVSEFKDALRNSGSDGIGQVSLEFYQKKKSRWPFSDECIPWEVWTIKVNVVSLANEQERQICREKVGEKLGEKIINIVEVMNRHEYLPKMPTQSEVDNVFDTSLKDVQPYLYKISYQITDSLGTSVTTTMRRLIKDTLAL</sequence>
<evidence type="ECO:0000250" key="1">
    <source>
        <dbReference type="UniProtKB" id="Q9BSB4"/>
    </source>
</evidence>
<evidence type="ECO:0000305" key="2"/>
<feature type="chain" id="PRO_0000294327" description="Autophagy-related protein 101">
    <location>
        <begin position="1"/>
        <end position="218"/>
    </location>
</feature>
<organism>
    <name type="scientific">Xenopus tropicalis</name>
    <name type="common">Western clawed frog</name>
    <name type="synonym">Silurana tropicalis</name>
    <dbReference type="NCBI Taxonomy" id="8364"/>
    <lineage>
        <taxon>Eukaryota</taxon>
        <taxon>Metazoa</taxon>
        <taxon>Chordata</taxon>
        <taxon>Craniata</taxon>
        <taxon>Vertebrata</taxon>
        <taxon>Euteleostomi</taxon>
        <taxon>Amphibia</taxon>
        <taxon>Batrachia</taxon>
        <taxon>Anura</taxon>
        <taxon>Pipoidea</taxon>
        <taxon>Pipidae</taxon>
        <taxon>Xenopodinae</taxon>
        <taxon>Xenopus</taxon>
        <taxon>Silurana</taxon>
    </lineage>
</organism>